<accession>P85363</accession>
<dbReference type="PIR" id="A58725">
    <property type="entry name" value="A58725"/>
</dbReference>
<dbReference type="GO" id="GO:0090729">
    <property type="term" value="F:toxin activity"/>
    <property type="evidence" value="ECO:0007669"/>
    <property type="project" value="UniProtKB-KW"/>
</dbReference>
<protein>
    <recommendedName>
        <fullName>Virotoxin</fullName>
    </recommendedName>
    <alternativeName>
        <fullName>Viroidin</fullName>
    </alternativeName>
    <alternativeName>
        <fullName>Viroisin</fullName>
    </alternativeName>
</protein>
<keyword id="KW-0208">D-amino acid</keyword>
<keyword id="KW-0903">Direct protein sequencing</keyword>
<keyword id="KW-0379">Hydroxylation</keyword>
<keyword id="KW-0488">Methylation</keyword>
<keyword id="KW-0800">Toxin</keyword>
<comment type="function">
    <text evidence="1">A toxin that binds to rabbit muscle actin with a dissociation constant of 20 nM preventing actin depolymerization, causing cellular and tissue disruption, and death.</text>
</comment>
<comment type="PTM">
    <text evidence="1">The 2'-methylsulfonyltryptophan is thought to arise from cross-linking to Cys-6, as found in other Amanita peptide toxins, followed by sulfur methylation, beta-elimination, and oxidation. The cysteine, converted to 2,3-didehydroalanine, is hydrated to D-serine.</text>
</comment>
<comment type="toxic dose">
    <text evidence="1">LD(50) is 2.5 mg/kg by intraperitoneal injection into mice.</text>
</comment>
<comment type="caution">
    <text evidence="2">This peptide is cyclic.</text>
</comment>
<name>VIRTX_AMAVR</name>
<sequence>AWLVTCP</sequence>
<feature type="peptide" id="PRO_0000316857" description="Virotoxin" evidence="1">
    <location>
        <begin position="1"/>
        <end position="7"/>
    </location>
</feature>
<feature type="modified residue" description="2'-methylsulfonyltryptophan" evidence="1">
    <location>
        <position position="2"/>
    </location>
</feature>
<feature type="modified residue" description="(4R)-4,5-dihydroxyleucine; in form viroidin" evidence="1">
    <location>
        <position position="3"/>
    </location>
</feature>
<feature type="modified residue" description="4,5,5'-trihydroxyleucine; in form viroisin" evidence="1">
    <location>
        <position position="3"/>
    </location>
</feature>
<feature type="modified residue" description="D-threonine" evidence="1">
    <location>
        <position position="5"/>
    </location>
</feature>
<feature type="modified residue" description="D-serine (Cys)" evidence="1">
    <location>
        <position position="6"/>
    </location>
</feature>
<feature type="modified residue" description="(3R,4R)-3,4-dihydroxyproline" evidence="1">
    <location>
        <position position="7"/>
    </location>
</feature>
<feature type="cross-link" description="Cyclopeptide (Ala-Pro)" evidence="1">
    <location>
        <begin position="1"/>
        <end position="7"/>
    </location>
</feature>
<evidence type="ECO:0000269" key="1">
    <source>
    </source>
</evidence>
<evidence type="ECO:0000305" key="2"/>
<proteinExistence type="evidence at protein level"/>
<organism>
    <name type="scientific">Amanita virosa</name>
    <name type="common">European destroying angel</name>
    <name type="synonym">Agaricus virosa</name>
    <dbReference type="NCBI Taxonomy" id="78357"/>
    <lineage>
        <taxon>Eukaryota</taxon>
        <taxon>Fungi</taxon>
        <taxon>Dikarya</taxon>
        <taxon>Basidiomycota</taxon>
        <taxon>Agaricomycotina</taxon>
        <taxon>Agaricomycetes</taxon>
        <taxon>Agaricomycetidae</taxon>
        <taxon>Agaricales</taxon>
        <taxon>Pluteineae</taxon>
        <taxon>Amanitaceae</taxon>
        <taxon>Amanita</taxon>
    </lineage>
</organism>
<reference evidence="2" key="1">
    <citation type="journal article" date="1980" name="Biochemistry">
        <title>Virotoxins: actin-binding cyclic peptides of Amanita virosa mushrooms.</title>
        <authorList>
            <person name="Faulstich H."/>
            <person name="Buku A."/>
            <person name="Bodenmueller H."/>
            <person name="Wieland T."/>
        </authorList>
    </citation>
    <scope>PROTEIN SEQUENCE</scope>
    <scope>FUNCTION</scope>
    <scope>METHYLATION AT TRP-2</scope>
    <scope>HYDROXYLATION AT LEU-3</scope>
    <scope>D-AMINO ACID AT THR-5 AND CYS-6</scope>
    <scope>HYDROXYLATION AT PRO-7</scope>
    <scope>TOXIC DOSE</scope>
</reference>